<name>Y912_PSEF5</name>
<accession>Q4KI90</accession>
<proteinExistence type="inferred from homology"/>
<dbReference type="EMBL" id="CP000076">
    <property type="protein sequence ID" value="AAY90199.1"/>
    <property type="molecule type" value="Genomic_DNA"/>
</dbReference>
<dbReference type="SMR" id="Q4KI90"/>
<dbReference type="STRING" id="220664.PFL_0912"/>
<dbReference type="KEGG" id="pfl:PFL_0912"/>
<dbReference type="PATRIC" id="fig|220664.5.peg.934"/>
<dbReference type="eggNOG" id="COG1660">
    <property type="taxonomic scope" value="Bacteria"/>
</dbReference>
<dbReference type="HOGENOM" id="CLU_059558_1_1_6"/>
<dbReference type="Proteomes" id="UP000008540">
    <property type="component" value="Chromosome"/>
</dbReference>
<dbReference type="GO" id="GO:0005524">
    <property type="term" value="F:ATP binding"/>
    <property type="evidence" value="ECO:0007669"/>
    <property type="project" value="UniProtKB-UniRule"/>
</dbReference>
<dbReference type="GO" id="GO:0005525">
    <property type="term" value="F:GTP binding"/>
    <property type="evidence" value="ECO:0007669"/>
    <property type="project" value="UniProtKB-UniRule"/>
</dbReference>
<dbReference type="Gene3D" id="3.40.50.300">
    <property type="entry name" value="P-loop containing nucleotide triphosphate hydrolases"/>
    <property type="match status" value="1"/>
</dbReference>
<dbReference type="HAMAP" id="MF_00636">
    <property type="entry name" value="RapZ_like"/>
    <property type="match status" value="1"/>
</dbReference>
<dbReference type="InterPro" id="IPR027417">
    <property type="entry name" value="P-loop_NTPase"/>
</dbReference>
<dbReference type="InterPro" id="IPR005337">
    <property type="entry name" value="RapZ-like"/>
</dbReference>
<dbReference type="InterPro" id="IPR053930">
    <property type="entry name" value="RapZ-like_N"/>
</dbReference>
<dbReference type="InterPro" id="IPR053931">
    <property type="entry name" value="RapZ_C"/>
</dbReference>
<dbReference type="NCBIfam" id="NF003828">
    <property type="entry name" value="PRK05416.1"/>
    <property type="match status" value="1"/>
</dbReference>
<dbReference type="PANTHER" id="PTHR30448">
    <property type="entry name" value="RNASE ADAPTER PROTEIN RAPZ"/>
    <property type="match status" value="1"/>
</dbReference>
<dbReference type="PANTHER" id="PTHR30448:SF0">
    <property type="entry name" value="RNASE ADAPTER PROTEIN RAPZ"/>
    <property type="match status" value="1"/>
</dbReference>
<dbReference type="Pfam" id="PF22740">
    <property type="entry name" value="PapZ_C"/>
    <property type="match status" value="1"/>
</dbReference>
<dbReference type="Pfam" id="PF03668">
    <property type="entry name" value="RapZ-like_N"/>
    <property type="match status" value="1"/>
</dbReference>
<dbReference type="PIRSF" id="PIRSF005052">
    <property type="entry name" value="P-loopkin"/>
    <property type="match status" value="1"/>
</dbReference>
<dbReference type="SUPFAM" id="SSF52540">
    <property type="entry name" value="P-loop containing nucleoside triphosphate hydrolases"/>
    <property type="match status" value="1"/>
</dbReference>
<comment type="function">
    <text evidence="1">Displays ATPase and GTPase activities.</text>
</comment>
<comment type="similarity">
    <text evidence="1">Belongs to the RapZ-like family.</text>
</comment>
<keyword id="KW-0067">ATP-binding</keyword>
<keyword id="KW-0342">GTP-binding</keyword>
<keyword id="KW-0547">Nucleotide-binding</keyword>
<sequence length="285" mass="32061">MRLIIVSGRSGSGKSTALDVLEDHGYYCIDNLPAGLLPELAERALIHTELAQPLVAVSIDARNLPSHLSRFPELLEEVRSRHIQCDVLYLDADEETLLKRFSETRRRHPLSSANRSLAEAIHDETQLLGPIVDLADLKVNTTNLNLYQLRDTIKLRLLNQPEPGTAFLVESFGFKRGMPVDADLVFDVRCLPNPYWKPELRAQSGLDAPVAEYLAAQPDVEEMFQDISSYLLKWLPRFAASNRAYVTIAIGCTGGHHRSVYLTERLGQVLQKSLKNVQVRHRDLS</sequence>
<feature type="chain" id="PRO_0000258981" description="Nucleotide-binding protein PFL_0912">
    <location>
        <begin position="1"/>
        <end position="285"/>
    </location>
</feature>
<feature type="binding site" evidence="1">
    <location>
        <begin position="8"/>
        <end position="15"/>
    </location>
    <ligand>
        <name>ATP</name>
        <dbReference type="ChEBI" id="CHEBI:30616"/>
    </ligand>
</feature>
<feature type="binding site" evidence="1">
    <location>
        <begin position="60"/>
        <end position="63"/>
    </location>
    <ligand>
        <name>GTP</name>
        <dbReference type="ChEBI" id="CHEBI:37565"/>
    </ligand>
</feature>
<organism>
    <name type="scientific">Pseudomonas fluorescens (strain ATCC BAA-477 / NRRL B-23932 / Pf-5)</name>
    <dbReference type="NCBI Taxonomy" id="220664"/>
    <lineage>
        <taxon>Bacteria</taxon>
        <taxon>Pseudomonadati</taxon>
        <taxon>Pseudomonadota</taxon>
        <taxon>Gammaproteobacteria</taxon>
        <taxon>Pseudomonadales</taxon>
        <taxon>Pseudomonadaceae</taxon>
        <taxon>Pseudomonas</taxon>
    </lineage>
</organism>
<evidence type="ECO:0000255" key="1">
    <source>
        <dbReference type="HAMAP-Rule" id="MF_00636"/>
    </source>
</evidence>
<protein>
    <recommendedName>
        <fullName evidence="1">Nucleotide-binding protein PFL_0912</fullName>
    </recommendedName>
</protein>
<reference key="1">
    <citation type="journal article" date="2005" name="Nat. Biotechnol.">
        <title>Complete genome sequence of the plant commensal Pseudomonas fluorescens Pf-5.</title>
        <authorList>
            <person name="Paulsen I.T."/>
            <person name="Press C.M."/>
            <person name="Ravel J."/>
            <person name="Kobayashi D.Y."/>
            <person name="Myers G.S.A."/>
            <person name="Mavrodi D.V."/>
            <person name="DeBoy R.T."/>
            <person name="Seshadri R."/>
            <person name="Ren Q."/>
            <person name="Madupu R."/>
            <person name="Dodson R.J."/>
            <person name="Durkin A.S."/>
            <person name="Brinkac L.M."/>
            <person name="Daugherty S.C."/>
            <person name="Sullivan S.A."/>
            <person name="Rosovitz M.J."/>
            <person name="Gwinn M.L."/>
            <person name="Zhou L."/>
            <person name="Schneider D.J."/>
            <person name="Cartinhour S.W."/>
            <person name="Nelson W.C."/>
            <person name="Weidman J."/>
            <person name="Watkins K."/>
            <person name="Tran K."/>
            <person name="Khouri H."/>
            <person name="Pierson E.A."/>
            <person name="Pierson L.S. III"/>
            <person name="Thomashow L.S."/>
            <person name="Loper J.E."/>
        </authorList>
    </citation>
    <scope>NUCLEOTIDE SEQUENCE [LARGE SCALE GENOMIC DNA]</scope>
    <source>
        <strain>ATCC BAA-477 / NRRL B-23932 / Pf-5</strain>
    </source>
</reference>
<gene>
    <name type="ordered locus">PFL_0912</name>
</gene>